<organism>
    <name type="scientific">Saccharomyces cerevisiae (strain ATCC 204508 / S288c)</name>
    <name type="common">Baker's yeast</name>
    <dbReference type="NCBI Taxonomy" id="559292"/>
    <lineage>
        <taxon>Eukaryota</taxon>
        <taxon>Fungi</taxon>
        <taxon>Dikarya</taxon>
        <taxon>Ascomycota</taxon>
        <taxon>Saccharomycotina</taxon>
        <taxon>Saccharomycetes</taxon>
        <taxon>Saccharomycetales</taxon>
        <taxon>Saccharomycetaceae</taxon>
        <taxon>Saccharomyces</taxon>
    </lineage>
</organism>
<feature type="transit peptide" description="Mitochondrion" evidence="5">
    <location>
        <begin position="1"/>
        <end position="57"/>
    </location>
</feature>
<feature type="chain" id="PRO_0000030468" description="Large ribosomal subunit protein uL15m">
    <location>
        <begin position="58"/>
        <end position="322"/>
    </location>
</feature>
<feature type="region of interest" description="Disordered" evidence="1">
    <location>
        <begin position="69"/>
        <end position="99"/>
    </location>
</feature>
<feature type="compositionally biased region" description="Gly residues" evidence="1">
    <location>
        <begin position="81"/>
        <end position="93"/>
    </location>
</feature>
<feature type="sequence conflict" description="In Ref. 3; AA sequence." evidence="10" ref="3">
    <original>D</original>
    <variation>K</variation>
    <location>
        <position position="68"/>
    </location>
</feature>
<feature type="sequence conflict" description="In Ref. 3; AA sequence." evidence="10" ref="3">
    <original>T</original>
    <variation>G</variation>
    <location>
        <position position="71"/>
    </location>
</feature>
<feature type="sequence conflict" description="In Ref. 4; AA sequence." evidence="10" ref="4">
    <original>F</original>
    <variation>I</variation>
    <location>
        <position position="182"/>
    </location>
</feature>
<feature type="sequence conflict" description="In Ref. 4; AA sequence." evidence="10" ref="4">
    <original>I</original>
    <variation>K</variation>
    <location>
        <position position="188"/>
    </location>
</feature>
<comment type="function">
    <text evidence="11 12">Component of the mitochondrial ribosome (mitoribosome), a dedicated translation machinery responsible for the synthesis of mitochondrial genome-encoded proteins, including at least some of the essential transmembrane subunits of the mitochondrial respiratory chain. The mitoribosomes are attached to the mitochondrial inner membrane and translation products are cotranslationally integrated into the membrane.</text>
</comment>
<comment type="subunit">
    <text evidence="5 6 8">Component of the mitochondrial large ribosomal subunit (mt-LSU). Mature yeast 74S mitochondrial ribosomes consist of a small (37S) and a large (54S) subunit. The 37S small subunit contains a 15S ribosomal RNA (15S mt-rRNA) and 34 different proteins. The 54S large subunit contains a 21S rRNA (21S mt-rRNA) and 46 different proteins.</text>
</comment>
<comment type="subcellular location">
    <subcellularLocation>
        <location evidence="2 4">Mitochondrion</location>
    </subcellularLocation>
    <text evidence="7">Mitoribosomes are tethered to the mitochondrial inner membrane and spatially aligned with the membrane insertion machinery through two distinct membrane contact sites, formed by the 21S rRNA expansion segment 96-ES1 and the inner membrane protein MBA1.</text>
</comment>
<comment type="miscellaneous">
    <text evidence="3">Present with 5350 molecules/cell in log phase SD medium.</text>
</comment>
<comment type="similarity">
    <text evidence="10">Belongs to the universal ribosomal protein uL15 family.</text>
</comment>
<proteinExistence type="evidence at protein level"/>
<protein>
    <recommendedName>
        <fullName evidence="9">Large ribosomal subunit protein uL15m</fullName>
    </recommendedName>
    <alternativeName>
        <fullName>54S ribosomal protein L10, mitochondrial</fullName>
    </alternativeName>
    <alternativeName>
        <fullName>YmL10/YmL18</fullName>
    </alternativeName>
</protein>
<name>RM10_YEAST</name>
<keyword id="KW-0002">3D-structure</keyword>
<keyword id="KW-0903">Direct protein sequencing</keyword>
<keyword id="KW-0496">Mitochondrion</keyword>
<keyword id="KW-1185">Reference proteome</keyword>
<keyword id="KW-0687">Ribonucleoprotein</keyword>
<keyword id="KW-0689">Ribosomal protein</keyword>
<keyword id="KW-0809">Transit peptide</keyword>
<evidence type="ECO:0000256" key="1">
    <source>
        <dbReference type="SAM" id="MobiDB-lite"/>
    </source>
</evidence>
<evidence type="ECO:0000269" key="2">
    <source>
    </source>
</evidence>
<evidence type="ECO:0000269" key="3">
    <source>
    </source>
</evidence>
<evidence type="ECO:0000269" key="4">
    <source>
    </source>
</evidence>
<evidence type="ECO:0000269" key="5">
    <source>
    </source>
</evidence>
<evidence type="ECO:0000269" key="6">
    <source>
    </source>
</evidence>
<evidence type="ECO:0000269" key="7">
    <source>
    </source>
</evidence>
<evidence type="ECO:0000269" key="8">
    <source>
    </source>
</evidence>
<evidence type="ECO:0000303" key="9">
    <source>
    </source>
</evidence>
<evidence type="ECO:0000305" key="10"/>
<evidence type="ECO:0000305" key="11">
    <source>
    </source>
</evidence>
<evidence type="ECO:0000305" key="12">
    <source>
    </source>
</evidence>
<gene>
    <name type="primary">MRPL10</name>
    <name type="synonym">MRPL18</name>
    <name type="ordered locus">YNL284C</name>
    <name type="ORF">N0580</name>
</gene>
<accession>P36520</accession>
<accession>D6W0R0</accession>
<accession>P36524</accession>
<dbReference type="EMBL" id="Z71560">
    <property type="protein sequence ID" value="CAA96198.1"/>
    <property type="molecule type" value="Genomic_DNA"/>
</dbReference>
<dbReference type="EMBL" id="BK006947">
    <property type="protein sequence ID" value="DAA10276.1"/>
    <property type="molecule type" value="Genomic_DNA"/>
</dbReference>
<dbReference type="PIR" id="S63258">
    <property type="entry name" value="S63258"/>
</dbReference>
<dbReference type="RefSeq" id="NP_014115.1">
    <property type="nucleotide sequence ID" value="NM_001183122.1"/>
</dbReference>
<dbReference type="PDB" id="3J6B">
    <property type="method" value="EM"/>
    <property type="resolution" value="3.20 A"/>
    <property type="chains" value="J=1-322"/>
</dbReference>
<dbReference type="PDB" id="5MRC">
    <property type="method" value="EM"/>
    <property type="resolution" value="3.25 A"/>
    <property type="chains" value="J=58-277"/>
</dbReference>
<dbReference type="PDB" id="5MRE">
    <property type="method" value="EM"/>
    <property type="resolution" value="3.75 A"/>
    <property type="chains" value="J=58-277"/>
</dbReference>
<dbReference type="PDB" id="5MRF">
    <property type="method" value="EM"/>
    <property type="resolution" value="4.97 A"/>
    <property type="chains" value="J=58-277"/>
</dbReference>
<dbReference type="PDBsum" id="3J6B"/>
<dbReference type="PDBsum" id="5MRC"/>
<dbReference type="PDBsum" id="5MRE"/>
<dbReference type="PDBsum" id="5MRF"/>
<dbReference type="EMDB" id="EMD-3551"/>
<dbReference type="EMDB" id="EMD-3552"/>
<dbReference type="EMDB" id="EMD-3553"/>
<dbReference type="SMR" id="P36520"/>
<dbReference type="BioGRID" id="35556">
    <property type="interactions" value="389"/>
</dbReference>
<dbReference type="ComplexPortal" id="CPX-1602">
    <property type="entry name" value="54S mitochondrial large ribosomal subunit"/>
</dbReference>
<dbReference type="DIP" id="DIP-6771N"/>
<dbReference type="FunCoup" id="P36520">
    <property type="interactions" value="772"/>
</dbReference>
<dbReference type="IntAct" id="P36520">
    <property type="interactions" value="89"/>
</dbReference>
<dbReference type="MINT" id="P36520"/>
<dbReference type="STRING" id="4932.YNL284C"/>
<dbReference type="PaxDb" id="4932-YNL284C"/>
<dbReference type="PeptideAtlas" id="P36520"/>
<dbReference type="EnsemblFungi" id="YNL284C_mRNA">
    <property type="protein sequence ID" value="YNL284C"/>
    <property type="gene ID" value="YNL284C"/>
</dbReference>
<dbReference type="GeneID" id="855436"/>
<dbReference type="KEGG" id="sce:YNL284C"/>
<dbReference type="AGR" id="SGD:S000005228"/>
<dbReference type="SGD" id="S000005228">
    <property type="gene designation" value="MRPL10"/>
</dbReference>
<dbReference type="VEuPathDB" id="FungiDB:YNL284C"/>
<dbReference type="eggNOG" id="KOG0846">
    <property type="taxonomic scope" value="Eukaryota"/>
</dbReference>
<dbReference type="GeneTree" id="ENSGT00390000009040"/>
<dbReference type="HOGENOM" id="CLU_055188_5_1_1"/>
<dbReference type="InParanoid" id="P36520"/>
<dbReference type="OMA" id="VVTRYYT"/>
<dbReference type="OrthoDB" id="361383at2759"/>
<dbReference type="BioCyc" id="YEAST:G3O-33275-MONOMER"/>
<dbReference type="BioGRID-ORCS" id="855436">
    <property type="hits" value="8 hits in 10 CRISPR screens"/>
</dbReference>
<dbReference type="PRO" id="PR:P36520"/>
<dbReference type="Proteomes" id="UP000002311">
    <property type="component" value="Chromosome XIV"/>
</dbReference>
<dbReference type="RNAct" id="P36520">
    <property type="molecule type" value="protein"/>
</dbReference>
<dbReference type="GO" id="GO:0005743">
    <property type="term" value="C:mitochondrial inner membrane"/>
    <property type="evidence" value="ECO:0000303"/>
    <property type="project" value="ComplexPortal"/>
</dbReference>
<dbReference type="GO" id="GO:0005762">
    <property type="term" value="C:mitochondrial large ribosomal subunit"/>
    <property type="evidence" value="ECO:0000314"/>
    <property type="project" value="SGD"/>
</dbReference>
<dbReference type="GO" id="GO:0005739">
    <property type="term" value="C:mitochondrion"/>
    <property type="evidence" value="ECO:0007005"/>
    <property type="project" value="SGD"/>
</dbReference>
<dbReference type="GO" id="GO:0003735">
    <property type="term" value="F:structural constituent of ribosome"/>
    <property type="evidence" value="ECO:0000314"/>
    <property type="project" value="SGD"/>
</dbReference>
<dbReference type="GO" id="GO:0032543">
    <property type="term" value="P:mitochondrial translation"/>
    <property type="evidence" value="ECO:0000303"/>
    <property type="project" value="ComplexPortal"/>
</dbReference>
<dbReference type="FunFam" id="3.100.10.10:FF:000017">
    <property type="entry name" value="Mrpl10p"/>
    <property type="match status" value="1"/>
</dbReference>
<dbReference type="Gene3D" id="3.100.10.10">
    <property type="match status" value="1"/>
</dbReference>
<dbReference type="HAMAP" id="MF_01341">
    <property type="entry name" value="Ribosomal_uL15"/>
    <property type="match status" value="1"/>
</dbReference>
<dbReference type="InterPro" id="IPR030878">
    <property type="entry name" value="Ribosomal_uL15"/>
</dbReference>
<dbReference type="InterPro" id="IPR021131">
    <property type="entry name" value="Ribosomal_uL15/eL18"/>
</dbReference>
<dbReference type="InterPro" id="IPR036227">
    <property type="entry name" value="Ribosomal_uL15/eL18_sf"/>
</dbReference>
<dbReference type="InterPro" id="IPR005749">
    <property type="entry name" value="Ribosomal_uL15_bac-type"/>
</dbReference>
<dbReference type="NCBIfam" id="TIGR01071">
    <property type="entry name" value="rplO_bact"/>
    <property type="match status" value="1"/>
</dbReference>
<dbReference type="PANTHER" id="PTHR12934">
    <property type="entry name" value="50S RIBOSOMAL PROTEIN L15"/>
    <property type="match status" value="1"/>
</dbReference>
<dbReference type="PANTHER" id="PTHR12934:SF11">
    <property type="entry name" value="LARGE RIBOSOMAL SUBUNIT PROTEIN UL15M"/>
    <property type="match status" value="1"/>
</dbReference>
<dbReference type="Pfam" id="PF00828">
    <property type="entry name" value="Ribosomal_L27A"/>
    <property type="match status" value="1"/>
</dbReference>
<dbReference type="SUPFAM" id="SSF52080">
    <property type="entry name" value="Ribosomal proteins L15p and L18e"/>
    <property type="match status" value="1"/>
</dbReference>
<sequence length="322" mass="36347">MKAERQTGLRNSFTTVIGRKLINTFVPSMMLTSVAGNDIFFRGLFKSPVLAFQSYRYVSILGQLKPSDGSTKSFKRLGRGPSSGLGKTSGRGQKGQKARGKVKSWFEGGQTPIYKLFPKIGFTNVGAKPLKELNLKRIQWFHDKNRLHLQPGEVLDMNKMRKLGLVTGPIKYGVKILASGKFHYNLPIALEASRASAKAIAAIEKAGGKFTARYYTPLGLRAHLNPQWFLEKRGRVPLQARPTKRRDIDFYSKEEKRGYLVMEKDKLLQDIKEAQNKGSRHFLKQNVKKSSLEIELEELSPEKDWVPVVSNSKVMNIKALDH</sequence>
<reference key="1">
    <citation type="journal article" date="1997" name="Nature">
        <title>The nucleotide sequence of Saccharomyces cerevisiae chromosome XIV and its evolutionary implications.</title>
        <authorList>
            <person name="Philippsen P."/>
            <person name="Kleine K."/>
            <person name="Poehlmann R."/>
            <person name="Duesterhoeft A."/>
            <person name="Hamberg K."/>
            <person name="Hegemann J.H."/>
            <person name="Obermaier B."/>
            <person name="Urrestarazu L.A."/>
            <person name="Aert R."/>
            <person name="Albermann K."/>
            <person name="Altmann R."/>
            <person name="Andre B."/>
            <person name="Baladron V."/>
            <person name="Ballesta J.P.G."/>
            <person name="Becam A.-M."/>
            <person name="Beinhauer J.D."/>
            <person name="Boskovic J."/>
            <person name="Buitrago M.J."/>
            <person name="Bussereau F."/>
            <person name="Coster F."/>
            <person name="Crouzet M."/>
            <person name="D'Angelo M."/>
            <person name="Dal Pero F."/>
            <person name="De Antoni A."/>
            <person name="del Rey F."/>
            <person name="Doignon F."/>
            <person name="Domdey H."/>
            <person name="Dubois E."/>
            <person name="Fiedler T.A."/>
            <person name="Fleig U."/>
            <person name="Floeth M."/>
            <person name="Fritz C."/>
            <person name="Gaillardin C."/>
            <person name="Garcia-Cantalejo J.M."/>
            <person name="Glansdorff N."/>
            <person name="Goffeau A."/>
            <person name="Gueldener U."/>
            <person name="Herbert C.J."/>
            <person name="Heumann K."/>
            <person name="Heuss-Neitzel D."/>
            <person name="Hilbert H."/>
            <person name="Hinni K."/>
            <person name="Iraqui Houssaini I."/>
            <person name="Jacquet M."/>
            <person name="Jimenez A."/>
            <person name="Jonniaux J.-L."/>
            <person name="Karpfinger-Hartl L."/>
            <person name="Lanfranchi G."/>
            <person name="Lepingle A."/>
            <person name="Levesque H."/>
            <person name="Lyck R."/>
            <person name="Maftahi M."/>
            <person name="Mallet L."/>
            <person name="Maurer C.T.C."/>
            <person name="Messenguy F."/>
            <person name="Mewes H.-W."/>
            <person name="Moestl D."/>
            <person name="Nasr F."/>
            <person name="Nicaud J.-M."/>
            <person name="Niedenthal R.K."/>
            <person name="Pandolfo D."/>
            <person name="Pierard A."/>
            <person name="Piravandi E."/>
            <person name="Planta R.J."/>
            <person name="Pohl T.M."/>
            <person name="Purnelle B."/>
            <person name="Rebischung C."/>
            <person name="Remacha M.A."/>
            <person name="Revuelta J.L."/>
            <person name="Rinke M."/>
            <person name="Saiz J.E."/>
            <person name="Sartorello F."/>
            <person name="Scherens B."/>
            <person name="Sen-Gupta M."/>
            <person name="Soler-Mira A."/>
            <person name="Urbanus J.H.M."/>
            <person name="Valle G."/>
            <person name="Van Dyck L."/>
            <person name="Verhasselt P."/>
            <person name="Vierendeels F."/>
            <person name="Vissers S."/>
            <person name="Voet M."/>
            <person name="Volckaert G."/>
            <person name="Wach A."/>
            <person name="Wambutt R."/>
            <person name="Wedler H."/>
            <person name="Zollner A."/>
            <person name="Hani J."/>
        </authorList>
    </citation>
    <scope>NUCLEOTIDE SEQUENCE [LARGE SCALE GENOMIC DNA]</scope>
    <source>
        <strain>ATCC 204508 / S288c</strain>
    </source>
</reference>
<reference key="2">
    <citation type="journal article" date="2014" name="G3 (Bethesda)">
        <title>The reference genome sequence of Saccharomyces cerevisiae: Then and now.</title>
        <authorList>
            <person name="Engel S.R."/>
            <person name="Dietrich F.S."/>
            <person name="Fisk D.G."/>
            <person name="Binkley G."/>
            <person name="Balakrishnan R."/>
            <person name="Costanzo M.C."/>
            <person name="Dwight S.S."/>
            <person name="Hitz B.C."/>
            <person name="Karra K."/>
            <person name="Nash R.S."/>
            <person name="Weng S."/>
            <person name="Wong E.D."/>
            <person name="Lloyd P."/>
            <person name="Skrzypek M.S."/>
            <person name="Miyasato S.R."/>
            <person name="Simison M."/>
            <person name="Cherry J.M."/>
        </authorList>
    </citation>
    <scope>GENOME REANNOTATION</scope>
    <source>
        <strain>ATCC 204508 / S288c</strain>
    </source>
</reference>
<reference key="3">
    <citation type="journal article" date="1991" name="FEBS Lett.">
        <title>Extended N-terminal sequencing of proteins of the large ribosomal subunit from yeast mitochondria.</title>
        <authorList>
            <person name="Grohmann L."/>
            <person name="Graack H.-R."/>
            <person name="Kruft V."/>
            <person name="Choli T."/>
            <person name="Goldschmidt-Reisin S."/>
            <person name="Kitakawa M."/>
        </authorList>
    </citation>
    <scope>PROTEIN SEQUENCE OF 58-71</scope>
    <scope>SUBUNIT</scope>
    <source>
        <strain>07173</strain>
    </source>
</reference>
<reference key="4">
    <citation type="journal article" date="1997" name="Eur. J. Biochem.">
        <title>Identification and characterization of the genes for mitochondrial ribosomal proteins of Saccharomyces cerevisiae.</title>
        <authorList>
            <person name="Kitakawa M."/>
            <person name="Graack H.-R."/>
            <person name="Grohmann L."/>
            <person name="Goldschmidt-Reisin S."/>
            <person name="Herfurth E."/>
            <person name="Wittmann-Liebold B."/>
            <person name="Nishimura T."/>
            <person name="Isono K."/>
        </authorList>
    </citation>
    <scope>PROTEIN SEQUENCE OF 182-195 AND 247-253</scope>
    <scope>SUBUNIT</scope>
    <source>
        <strain>07173</strain>
    </source>
</reference>
<reference key="5">
    <citation type="journal article" date="2003" name="Nature">
        <title>Global analysis of protein localization in budding yeast.</title>
        <authorList>
            <person name="Huh W.-K."/>
            <person name="Falvo J.V."/>
            <person name="Gerke L.C."/>
            <person name="Carroll A.S."/>
            <person name="Howson R.W."/>
            <person name="Weissman J.S."/>
            <person name="O'Shea E.K."/>
        </authorList>
    </citation>
    <scope>SUBCELLULAR LOCATION [LARGE SCALE ANALYSIS]</scope>
</reference>
<reference key="6">
    <citation type="journal article" date="2003" name="Nature">
        <title>Global analysis of protein expression in yeast.</title>
        <authorList>
            <person name="Ghaemmaghami S."/>
            <person name="Huh W.-K."/>
            <person name="Bower K."/>
            <person name="Howson R.W."/>
            <person name="Belle A."/>
            <person name="Dephoure N."/>
            <person name="O'Shea E.K."/>
            <person name="Weissman J.S."/>
        </authorList>
    </citation>
    <scope>LEVEL OF PROTEIN EXPRESSION [LARGE SCALE ANALYSIS]</scope>
</reference>
<reference key="7">
    <citation type="journal article" date="2003" name="Proc. Natl. Acad. Sci. U.S.A.">
        <title>The proteome of Saccharomyces cerevisiae mitochondria.</title>
        <authorList>
            <person name="Sickmann A."/>
            <person name="Reinders J."/>
            <person name="Wagner Y."/>
            <person name="Joppich C."/>
            <person name="Zahedi R.P."/>
            <person name="Meyer H.E."/>
            <person name="Schoenfisch B."/>
            <person name="Perschil I."/>
            <person name="Chacinska A."/>
            <person name="Guiard B."/>
            <person name="Rehling P."/>
            <person name="Pfanner N."/>
            <person name="Meisinger C."/>
        </authorList>
    </citation>
    <scope>SUBCELLULAR LOCATION [LARGE SCALE ANALYSIS]</scope>
    <source>
        <strain>ATCC 76625 / YPH499</strain>
    </source>
</reference>
<reference key="8">
    <citation type="journal article" date="2015" name="Nat. Commun.">
        <title>Organization of the mitochondrial translation machinery studied in situ by cryoelectron tomography.</title>
        <authorList>
            <person name="Pfeffer S."/>
            <person name="Woellhaf M.W."/>
            <person name="Herrmann J.M."/>
            <person name="Forster F."/>
        </authorList>
    </citation>
    <scope>SUBCELLULAR LOCATION</scope>
</reference>
<reference key="9">
    <citation type="journal article" date="2014" name="Science">
        <title>Structure of the yeast mitochondrial large ribosomal subunit.</title>
        <authorList>
            <person name="Amunts A."/>
            <person name="Brown A."/>
            <person name="Bai X.C."/>
            <person name="Llacer J.L."/>
            <person name="Hussain T."/>
            <person name="Emsley P."/>
            <person name="Long F."/>
            <person name="Murshudov G."/>
            <person name="Scheres S.H."/>
            <person name="Ramakrishnan V."/>
        </authorList>
    </citation>
    <scope>STRUCTURE BY ELECTRON MICROSCOPY (3.20 ANGSTROMS)</scope>
    <scope>SUBUNIT</scope>
</reference>